<sequence>MKHLHIIDSHTGGEPTRVVVSGFPPLGDGPMAERLAALARDHDRYRTACILEPRGSDVLVGALLCEPVSAGAAAGVIFFNNAGYLGMCGHGTIGLVRTLHHMGRIAPGVHRIETPVGDVEATLHDDLSVSVRNVLAYRHAKDVVVEVPGHGSVTGDVAWGGNWFFLVSDHGQRIAGENVAALAAYASAVRAGLERAGVTGRDGAPIDHIELFADDPEHDSRSFVLCPGHAYDRSPCGTGTSAKLACLAADGKLAPGAAWRQASVIGSVFSASYERAESGVVPTIRGSAHLSAEATLLIEDDDPFGWGIVS</sequence>
<reference key="1">
    <citation type="journal article" date="2005" name="BMC Genomics">
        <title>Bacterial genome adaptation to niches: divergence of the potential virulence genes in three Burkholderia species of different survival strategies.</title>
        <authorList>
            <person name="Kim H.S."/>
            <person name="Schell M.A."/>
            <person name="Yu Y."/>
            <person name="Ulrich R.L."/>
            <person name="Sarria S.H."/>
            <person name="Nierman W.C."/>
            <person name="DeShazer D."/>
        </authorList>
    </citation>
    <scope>NUCLEOTIDE SEQUENCE [LARGE SCALE GENOMIC DNA]</scope>
    <source>
        <strain>ATCC 700388 / DSM 13276 / CCUG 48851 / CIP 106301 / E264</strain>
    </source>
</reference>
<reference key="2">
    <citation type="submission" date="2014-06" db="EMBL/GenBank/DDBJ databases">
        <authorList>
            <person name="Bishop-Lilly K.A."/>
            <person name="Broomall S.M."/>
            <person name="Chain P.S."/>
            <person name="Chertkov O."/>
            <person name="Coyne S.R."/>
            <person name="Daligault H.E."/>
            <person name="Davenport K.W."/>
            <person name="Erkkila T."/>
            <person name="Frey K.G."/>
            <person name="Gibbons H.S."/>
            <person name="Gu W."/>
            <person name="Jaissle J."/>
            <person name="Johnson S.L."/>
            <person name="Koroleva G.I."/>
            <person name="Ladner J.T."/>
            <person name="Lo C.-C."/>
            <person name="Minogue T.D."/>
            <person name="Munk C."/>
            <person name="Palacios G.F."/>
            <person name="Redden C.L."/>
            <person name="Rosenzweig C.N."/>
            <person name="Scholz M.B."/>
            <person name="Teshima H."/>
            <person name="Xu Y."/>
        </authorList>
    </citation>
    <scope>NUCLEOTIDE SEQUENCE [LARGE SCALE GENOMIC DNA]</scope>
    <source>
        <strain>ATCC 700388 / DSM 13276 / CCUG 48851 / CIP 106301 / E264</strain>
    </source>
</reference>
<reference key="3">
    <citation type="journal article" date="2014" name="Elife">
        <title>Prediction and characterization of enzymatic activities guided by sequence similarity and genome neighborhood networks.</title>
        <authorList>
            <person name="Zhao S."/>
            <person name="Sakai A."/>
            <person name="Zhang X."/>
            <person name="Vetting M.W."/>
            <person name="Kumar R."/>
            <person name="Hillerich B."/>
            <person name="San Francisco B."/>
            <person name="Solbiati J."/>
            <person name="Steves A."/>
            <person name="Brown S."/>
            <person name="Akiva E."/>
            <person name="Barber A."/>
            <person name="Seidel R.D."/>
            <person name="Babbitt P.C."/>
            <person name="Almo S.C."/>
            <person name="Gerlt J.A."/>
            <person name="Jacobson M.P."/>
        </authorList>
    </citation>
    <scope>FUNCTION</scope>
    <scope>CATALYTIC ACTIVITY</scope>
    <scope>BIOPHYSICOCHEMICAL PROPERTIES</scope>
</reference>
<feature type="chain" id="PRO_0000432283" description="4-hydroxyproline 2-epimerase">
    <location>
        <begin position="1"/>
        <end position="310"/>
    </location>
</feature>
<feature type="active site" description="Proton acceptor" evidence="1">
    <location>
        <position position="88"/>
    </location>
</feature>
<feature type="active site" description="Proton donor" evidence="1">
    <location>
        <position position="236"/>
    </location>
</feature>
<feature type="binding site" evidence="1">
    <location>
        <begin position="89"/>
        <end position="90"/>
    </location>
    <ligand>
        <name>substrate</name>
    </ligand>
</feature>
<feature type="binding site" evidence="1">
    <location>
        <position position="208"/>
    </location>
    <ligand>
        <name>substrate</name>
    </ligand>
</feature>
<feature type="binding site" evidence="1">
    <location>
        <position position="232"/>
    </location>
    <ligand>
        <name>substrate</name>
    </ligand>
</feature>
<feature type="binding site" evidence="1">
    <location>
        <begin position="237"/>
        <end position="238"/>
    </location>
    <ligand>
        <name>substrate</name>
    </ligand>
</feature>
<gene>
    <name evidence="5" type="ordered locus">BTH_II2067</name>
    <name evidence="6" type="ORF">DR63_1264</name>
</gene>
<accession>Q2T3J4</accession>
<proteinExistence type="evidence at protein level"/>
<evidence type="ECO:0000250" key="1">
    <source>
        <dbReference type="UniProtKB" id="Q4KGU2"/>
    </source>
</evidence>
<evidence type="ECO:0000269" key="2">
    <source>
    </source>
</evidence>
<evidence type="ECO:0000303" key="3">
    <source>
    </source>
</evidence>
<evidence type="ECO:0000305" key="4"/>
<evidence type="ECO:0000312" key="5">
    <source>
        <dbReference type="EMBL" id="ABC36078.1"/>
    </source>
</evidence>
<evidence type="ECO:0000312" key="6">
    <source>
        <dbReference type="EMBL" id="AIP24752.1"/>
    </source>
</evidence>
<name>4HYPE_BURTA</name>
<protein>
    <recommendedName>
        <fullName evidence="3">4-hydroxyproline 2-epimerase</fullName>
        <shortName>4Hyp 2-epimerase</shortName>
        <shortName evidence="3">4HypE</shortName>
        <ecNumber evidence="2">5.1.1.8</ecNumber>
    </recommendedName>
</protein>
<keyword id="KW-0413">Isomerase</keyword>
<organism>
    <name type="scientific">Burkholderia thailandensis (strain ATCC 700388 / DSM 13276 / CCUG 48851 / CIP 106301 / E264)</name>
    <dbReference type="NCBI Taxonomy" id="271848"/>
    <lineage>
        <taxon>Bacteria</taxon>
        <taxon>Pseudomonadati</taxon>
        <taxon>Pseudomonadota</taxon>
        <taxon>Betaproteobacteria</taxon>
        <taxon>Burkholderiales</taxon>
        <taxon>Burkholderiaceae</taxon>
        <taxon>Burkholderia</taxon>
        <taxon>pseudomallei group</taxon>
    </lineage>
</organism>
<dbReference type="EC" id="5.1.1.8" evidence="2"/>
<dbReference type="EMBL" id="CP000085">
    <property type="protein sequence ID" value="ABC36078.1"/>
    <property type="molecule type" value="Genomic_DNA"/>
</dbReference>
<dbReference type="EMBL" id="CP008785">
    <property type="protein sequence ID" value="AIP24752.1"/>
    <property type="molecule type" value="Genomic_DNA"/>
</dbReference>
<dbReference type="RefSeq" id="WP_009894007.1">
    <property type="nucleotide sequence ID" value="NC_007650.1"/>
</dbReference>
<dbReference type="SMR" id="Q2T3J4"/>
<dbReference type="GeneID" id="45119483"/>
<dbReference type="KEGG" id="bte:BTH_II2067"/>
<dbReference type="HOGENOM" id="CLU_036729_1_0_4"/>
<dbReference type="SABIO-RK" id="Q2T3J4"/>
<dbReference type="Proteomes" id="UP000001930">
    <property type="component" value="Chromosome II"/>
</dbReference>
<dbReference type="GO" id="GO:0047580">
    <property type="term" value="F:4-hydroxyproline epimerase activity"/>
    <property type="evidence" value="ECO:0000314"/>
    <property type="project" value="CACAO"/>
</dbReference>
<dbReference type="FunFam" id="3.10.310.10:FF:000012">
    <property type="entry name" value="4-hydroxyproline 2-epimerase"/>
    <property type="match status" value="1"/>
</dbReference>
<dbReference type="Gene3D" id="3.10.310.10">
    <property type="entry name" value="Diaminopimelate Epimerase, Chain A, domain 1"/>
    <property type="match status" value="2"/>
</dbReference>
<dbReference type="InterPro" id="IPR008794">
    <property type="entry name" value="Pro_racemase_fam"/>
</dbReference>
<dbReference type="NCBIfam" id="NF010577">
    <property type="entry name" value="PRK13970.1"/>
    <property type="match status" value="1"/>
</dbReference>
<dbReference type="PANTHER" id="PTHR33442">
    <property type="entry name" value="TRANS-3-HYDROXY-L-PROLINE DEHYDRATASE"/>
    <property type="match status" value="1"/>
</dbReference>
<dbReference type="PANTHER" id="PTHR33442:SF1">
    <property type="entry name" value="TRANS-3-HYDROXY-L-PROLINE DEHYDRATASE"/>
    <property type="match status" value="1"/>
</dbReference>
<dbReference type="Pfam" id="PF05544">
    <property type="entry name" value="Pro_racemase"/>
    <property type="match status" value="1"/>
</dbReference>
<dbReference type="PIRSF" id="PIRSF029792">
    <property type="entry name" value="Pro_racemase"/>
    <property type="match status" value="1"/>
</dbReference>
<dbReference type="SFLD" id="SFLDS00028">
    <property type="entry name" value="Proline_Racemase"/>
    <property type="match status" value="1"/>
</dbReference>
<dbReference type="SUPFAM" id="SSF54506">
    <property type="entry name" value="Diaminopimelate epimerase-like"/>
    <property type="match status" value="1"/>
</dbReference>
<comment type="function">
    <text evidence="2">Catalyzes the epimerization of trans-4-hydroxy-L-proline (t4LHyp) to cis-4-hydroxy-D-proline (c4DHyp). Is likely involved in a degradation pathway that converts t4LHyp to alpha-ketoglutarate. Can also catalyze the dehydration of trans-3-hydroxy-L-proline (t3LHyp) to Delta(1)-pyrroline-2-carboxylate (Pyr2C), albeit with 42-fold lower efficiency. Displays no proline racemase activity.</text>
</comment>
<comment type="catalytic activity">
    <reaction evidence="2">
        <text>trans-4-hydroxy-L-proline = cis-4-hydroxy-D-proline</text>
        <dbReference type="Rhea" id="RHEA:21152"/>
        <dbReference type="ChEBI" id="CHEBI:57690"/>
        <dbReference type="ChEBI" id="CHEBI:58375"/>
        <dbReference type="EC" id="5.1.1.8"/>
    </reaction>
</comment>
<comment type="biophysicochemical properties">
    <kinetics>
        <KM evidence="2">1.4 mM for trans-4-hydroxy-L-proline</KM>
        <KM evidence="2">26 mM for trans-3-hydroxy-L-proline</KM>
        <text evidence="2">kcat is 40 sec(-1) for t4LHyp epimerization. kcat is 17 sec(-1) for t3LHyp dehydration.</text>
    </kinetics>
</comment>
<comment type="similarity">
    <text evidence="4">Belongs to the proline racemase family.</text>
</comment>